<accession>O25943</accession>
<reference key="1">
    <citation type="journal article" date="1997" name="Nature">
        <title>The complete genome sequence of the gastric pathogen Helicobacter pylori.</title>
        <authorList>
            <person name="Tomb J.-F."/>
            <person name="White O."/>
            <person name="Kerlavage A.R."/>
            <person name="Clayton R.A."/>
            <person name="Sutton G.G."/>
            <person name="Fleischmann R.D."/>
            <person name="Ketchum K.A."/>
            <person name="Klenk H.-P."/>
            <person name="Gill S.R."/>
            <person name="Dougherty B.A."/>
            <person name="Nelson K.E."/>
            <person name="Quackenbush J."/>
            <person name="Zhou L."/>
            <person name="Kirkness E.F."/>
            <person name="Peterson S.N."/>
            <person name="Loftus B.J."/>
            <person name="Richardson D.L."/>
            <person name="Dodson R.J."/>
            <person name="Khalak H.G."/>
            <person name="Glodek A."/>
            <person name="McKenney K."/>
            <person name="FitzGerald L.M."/>
            <person name="Lee N."/>
            <person name="Adams M.D."/>
            <person name="Hickey E.K."/>
            <person name="Berg D.E."/>
            <person name="Gocayne J.D."/>
            <person name="Utterback T.R."/>
            <person name="Peterson J.D."/>
            <person name="Kelley J.M."/>
            <person name="Cotton M.D."/>
            <person name="Weidman J.F."/>
            <person name="Fujii C."/>
            <person name="Bowman C."/>
            <person name="Watthey L."/>
            <person name="Wallin E."/>
            <person name="Hayes W.S."/>
            <person name="Borodovsky M."/>
            <person name="Karp P.D."/>
            <person name="Smith H.O."/>
            <person name="Fraser C.M."/>
            <person name="Venter J.C."/>
        </authorList>
    </citation>
    <scope>NUCLEOTIDE SEQUENCE [LARGE SCALE GENOMIC DNA]</scope>
    <source>
        <strain>ATCC 700392 / 26695</strain>
    </source>
</reference>
<organism>
    <name type="scientific">Helicobacter pylori (strain ATCC 700392 / 26695)</name>
    <name type="common">Campylobacter pylori</name>
    <dbReference type="NCBI Taxonomy" id="85962"/>
    <lineage>
        <taxon>Bacteria</taxon>
        <taxon>Pseudomonadati</taxon>
        <taxon>Campylobacterota</taxon>
        <taxon>Epsilonproteobacteria</taxon>
        <taxon>Campylobacterales</taxon>
        <taxon>Helicobacteraceae</taxon>
        <taxon>Helicobacter</taxon>
    </lineage>
</organism>
<name>RECN_HELPY</name>
<keyword id="KW-0067">ATP-binding</keyword>
<keyword id="KW-0227">DNA damage</keyword>
<keyword id="KW-0234">DNA repair</keyword>
<keyword id="KW-0547">Nucleotide-binding</keyword>
<keyword id="KW-1185">Reference proteome</keyword>
<evidence type="ECO:0000250" key="1"/>
<evidence type="ECO:0000255" key="2"/>
<evidence type="ECO:0000305" key="3"/>
<dbReference type="EMBL" id="AE000511">
    <property type="protein sequence ID" value="AAD08433.1"/>
    <property type="molecule type" value="Genomic_DNA"/>
</dbReference>
<dbReference type="PIR" id="A64694">
    <property type="entry name" value="A64694"/>
</dbReference>
<dbReference type="RefSeq" id="NP_208184.1">
    <property type="nucleotide sequence ID" value="NC_000915.1"/>
</dbReference>
<dbReference type="RefSeq" id="WP_001204425.1">
    <property type="nucleotide sequence ID" value="NC_018939.1"/>
</dbReference>
<dbReference type="SMR" id="O25943"/>
<dbReference type="DIP" id="DIP-3217N"/>
<dbReference type="FunCoup" id="O25943">
    <property type="interactions" value="318"/>
</dbReference>
<dbReference type="IntAct" id="O25943">
    <property type="interactions" value="5"/>
</dbReference>
<dbReference type="MINT" id="O25943"/>
<dbReference type="STRING" id="85962.HP_1393"/>
<dbReference type="PaxDb" id="85962-C694_07195"/>
<dbReference type="EnsemblBacteria" id="AAD08433">
    <property type="protein sequence ID" value="AAD08433"/>
    <property type="gene ID" value="HP_1393"/>
</dbReference>
<dbReference type="KEGG" id="heo:C694_07195"/>
<dbReference type="KEGG" id="hpy:HP_1393"/>
<dbReference type="PATRIC" id="fig|85962.47.peg.1492"/>
<dbReference type="eggNOG" id="COG0497">
    <property type="taxonomic scope" value="Bacteria"/>
</dbReference>
<dbReference type="InParanoid" id="O25943"/>
<dbReference type="OrthoDB" id="9806954at2"/>
<dbReference type="PhylomeDB" id="O25943"/>
<dbReference type="Proteomes" id="UP000000429">
    <property type="component" value="Chromosome"/>
</dbReference>
<dbReference type="GO" id="GO:0043590">
    <property type="term" value="C:bacterial nucleoid"/>
    <property type="evidence" value="ECO:0000318"/>
    <property type="project" value="GO_Central"/>
</dbReference>
<dbReference type="GO" id="GO:0005524">
    <property type="term" value="F:ATP binding"/>
    <property type="evidence" value="ECO:0007669"/>
    <property type="project" value="UniProtKB-KW"/>
</dbReference>
<dbReference type="GO" id="GO:0016887">
    <property type="term" value="F:ATP hydrolysis activity"/>
    <property type="evidence" value="ECO:0007669"/>
    <property type="project" value="InterPro"/>
</dbReference>
<dbReference type="GO" id="GO:0006310">
    <property type="term" value="P:DNA recombination"/>
    <property type="evidence" value="ECO:0007669"/>
    <property type="project" value="InterPro"/>
</dbReference>
<dbReference type="GO" id="GO:0006281">
    <property type="term" value="P:DNA repair"/>
    <property type="evidence" value="ECO:0007669"/>
    <property type="project" value="UniProtKB-KW"/>
</dbReference>
<dbReference type="GO" id="GO:0009432">
    <property type="term" value="P:SOS response"/>
    <property type="evidence" value="ECO:0000318"/>
    <property type="project" value="GO_Central"/>
</dbReference>
<dbReference type="Gene3D" id="3.40.50.300">
    <property type="entry name" value="P-loop containing nucleotide triphosphate hydrolases"/>
    <property type="match status" value="2"/>
</dbReference>
<dbReference type="InterPro" id="IPR003593">
    <property type="entry name" value="AAA+_ATPase"/>
</dbReference>
<dbReference type="InterPro" id="IPR004604">
    <property type="entry name" value="DNA_recomb/repair_RecN"/>
</dbReference>
<dbReference type="InterPro" id="IPR027417">
    <property type="entry name" value="P-loop_NTPase"/>
</dbReference>
<dbReference type="InterPro" id="IPR003395">
    <property type="entry name" value="RecF/RecN/SMC_N"/>
</dbReference>
<dbReference type="PANTHER" id="PTHR11059">
    <property type="entry name" value="DNA REPAIR PROTEIN RECN"/>
    <property type="match status" value="1"/>
</dbReference>
<dbReference type="PANTHER" id="PTHR11059:SF0">
    <property type="entry name" value="DNA REPAIR PROTEIN RECN"/>
    <property type="match status" value="1"/>
</dbReference>
<dbReference type="Pfam" id="PF02463">
    <property type="entry name" value="SMC_N"/>
    <property type="match status" value="1"/>
</dbReference>
<dbReference type="PIRSF" id="PIRSF003128">
    <property type="entry name" value="RecN"/>
    <property type="match status" value="1"/>
</dbReference>
<dbReference type="SMART" id="SM00382">
    <property type="entry name" value="AAA"/>
    <property type="match status" value="1"/>
</dbReference>
<dbReference type="SUPFAM" id="SSF52540">
    <property type="entry name" value="P-loop containing nucleoside triphosphate hydrolases"/>
    <property type="match status" value="1"/>
</dbReference>
<proteinExistence type="inferred from homology"/>
<protein>
    <recommendedName>
        <fullName>DNA repair protein RecN</fullName>
    </recommendedName>
    <alternativeName>
        <fullName>Recombination protein N</fullName>
    </alternativeName>
</protein>
<sequence>MRDFNNAQITRLKVRQNAVFEKLDLEFKDGLSAISGASGVGKSVLIASLLGAFGLKESNASNIEVELIAPFLDTEEYGIFREDEHEPLVISVIKKEKTRYFLNQTSLSKNTLKALLKGLIKRLSNDRFSQNELNDILMLSLLDGYIQNENKAFSPLLGALEEKFTRLEKLEKERRLLEDKKRFQKDLEERLNFEKMKLERLDLKEDEYERLLEQKKLLSSKEKLNDKIALALEVLENTHKITHALESVGHSAEFLKSALLEASALLEKEQAKLEECERLDIEKVLERLGMLSGIIKDYGSIMHAKERLGHVKNELHNLKEIDSHCETYHKEIERLKTECLKLCEEISGFRKEYLAGFNALLSAKAKDLLLKSPSLVLEDAPMSEKGAQKLVLNLQNSQLETLSSGEYSRLRLAFMLLEMEFLKDFKGVLVLDEMDSNLSGEESLAVSKALETLSSHSQIFAISHQVHIPALAKNHILVFKENHKSLAKTLNNEERVLEIARMIGGSENIESAISFAKEKLKAQE</sequence>
<gene>
    <name type="primary">recN</name>
    <name type="ordered locus">HP_1393</name>
</gene>
<comment type="function">
    <text evidence="1">May be involved in recombinational repair of damaged DNA.</text>
</comment>
<comment type="similarity">
    <text evidence="3">Belongs to the RecN family.</text>
</comment>
<feature type="chain" id="PRO_0000188019" description="DNA repair protein RecN">
    <location>
        <begin position="1"/>
        <end position="524"/>
    </location>
</feature>
<feature type="binding site" evidence="2">
    <location>
        <begin position="36"/>
        <end position="43"/>
    </location>
    <ligand>
        <name>ATP</name>
        <dbReference type="ChEBI" id="CHEBI:30616"/>
    </ligand>
</feature>